<evidence type="ECO:0000255" key="1">
    <source>
        <dbReference type="HAMAP-Rule" id="MF_00206"/>
    </source>
</evidence>
<evidence type="ECO:0000255" key="2">
    <source>
        <dbReference type="PROSITE-ProRule" id="PRU01266"/>
    </source>
</evidence>
<evidence type="ECO:0000256" key="3">
    <source>
        <dbReference type="SAM" id="MobiDB-lite"/>
    </source>
</evidence>
<keyword id="KW-0004">4Fe-4S</keyword>
<keyword id="KW-0963">Cytoplasm</keyword>
<keyword id="KW-0408">Iron</keyword>
<keyword id="KW-0411">Iron-sulfur</keyword>
<keyword id="KW-0479">Metal-binding</keyword>
<keyword id="KW-1185">Reference proteome</keyword>
<keyword id="KW-0949">S-adenosyl-L-methionine</keyword>
<keyword id="KW-0808">Transferase</keyword>
<name>LIPA_AZOC5</name>
<comment type="function">
    <text evidence="1">Catalyzes the radical-mediated insertion of two sulfur atoms into the C-6 and C-8 positions of the octanoyl moiety bound to the lipoyl domains of lipoate-dependent enzymes, thereby converting the octanoylated domains into lipoylated derivatives.</text>
</comment>
<comment type="catalytic activity">
    <reaction evidence="1">
        <text>[[Fe-S] cluster scaffold protein carrying a second [4Fe-4S](2+) cluster] + N(6)-octanoyl-L-lysyl-[protein] + 2 oxidized [2Fe-2S]-[ferredoxin] + 2 S-adenosyl-L-methionine + 4 H(+) = [[Fe-S] cluster scaffold protein] + N(6)-[(R)-dihydrolipoyl]-L-lysyl-[protein] + 4 Fe(3+) + 2 hydrogen sulfide + 2 5'-deoxyadenosine + 2 L-methionine + 2 reduced [2Fe-2S]-[ferredoxin]</text>
        <dbReference type="Rhea" id="RHEA:16585"/>
        <dbReference type="Rhea" id="RHEA-COMP:9928"/>
        <dbReference type="Rhea" id="RHEA-COMP:10000"/>
        <dbReference type="Rhea" id="RHEA-COMP:10001"/>
        <dbReference type="Rhea" id="RHEA-COMP:10475"/>
        <dbReference type="Rhea" id="RHEA-COMP:14568"/>
        <dbReference type="Rhea" id="RHEA-COMP:14569"/>
        <dbReference type="ChEBI" id="CHEBI:15378"/>
        <dbReference type="ChEBI" id="CHEBI:17319"/>
        <dbReference type="ChEBI" id="CHEBI:29034"/>
        <dbReference type="ChEBI" id="CHEBI:29919"/>
        <dbReference type="ChEBI" id="CHEBI:33722"/>
        <dbReference type="ChEBI" id="CHEBI:33737"/>
        <dbReference type="ChEBI" id="CHEBI:33738"/>
        <dbReference type="ChEBI" id="CHEBI:57844"/>
        <dbReference type="ChEBI" id="CHEBI:59789"/>
        <dbReference type="ChEBI" id="CHEBI:78809"/>
        <dbReference type="ChEBI" id="CHEBI:83100"/>
        <dbReference type="EC" id="2.8.1.8"/>
    </reaction>
</comment>
<comment type="cofactor">
    <cofactor evidence="1">
        <name>[4Fe-4S] cluster</name>
        <dbReference type="ChEBI" id="CHEBI:49883"/>
    </cofactor>
    <text evidence="1">Binds 2 [4Fe-4S] clusters per subunit. One cluster is coordinated with 3 cysteines and an exchangeable S-adenosyl-L-methionine.</text>
</comment>
<comment type="pathway">
    <text evidence="1">Protein modification; protein lipoylation via endogenous pathway; protein N(6)-(lipoyl)lysine from octanoyl-[acyl-carrier-protein]: step 2/2.</text>
</comment>
<comment type="subcellular location">
    <subcellularLocation>
        <location evidence="1">Cytoplasm</location>
    </subcellularLocation>
</comment>
<comment type="similarity">
    <text evidence="1">Belongs to the radical SAM superfamily. Lipoyl synthase family.</text>
</comment>
<accession>A8I4L8</accession>
<feature type="chain" id="PRO_1000071727" description="Lipoyl synthase">
    <location>
        <begin position="1"/>
        <end position="317"/>
    </location>
</feature>
<feature type="domain" description="Radical SAM core" evidence="2">
    <location>
        <begin position="69"/>
        <end position="285"/>
    </location>
</feature>
<feature type="region of interest" description="Disordered" evidence="3">
    <location>
        <begin position="1"/>
        <end position="22"/>
    </location>
</feature>
<feature type="compositionally biased region" description="Basic and acidic residues" evidence="3">
    <location>
        <begin position="12"/>
        <end position="22"/>
    </location>
</feature>
<feature type="binding site" evidence="1">
    <location>
        <position position="57"/>
    </location>
    <ligand>
        <name>[4Fe-4S] cluster</name>
        <dbReference type="ChEBI" id="CHEBI:49883"/>
        <label>1</label>
    </ligand>
</feature>
<feature type="binding site" evidence="1">
    <location>
        <position position="62"/>
    </location>
    <ligand>
        <name>[4Fe-4S] cluster</name>
        <dbReference type="ChEBI" id="CHEBI:49883"/>
        <label>1</label>
    </ligand>
</feature>
<feature type="binding site" evidence="1">
    <location>
        <position position="68"/>
    </location>
    <ligand>
        <name>[4Fe-4S] cluster</name>
        <dbReference type="ChEBI" id="CHEBI:49883"/>
        <label>1</label>
    </ligand>
</feature>
<feature type="binding site" evidence="1">
    <location>
        <position position="83"/>
    </location>
    <ligand>
        <name>[4Fe-4S] cluster</name>
        <dbReference type="ChEBI" id="CHEBI:49883"/>
        <label>2</label>
        <note>4Fe-4S-S-AdoMet</note>
    </ligand>
</feature>
<feature type="binding site" evidence="1">
    <location>
        <position position="87"/>
    </location>
    <ligand>
        <name>[4Fe-4S] cluster</name>
        <dbReference type="ChEBI" id="CHEBI:49883"/>
        <label>2</label>
        <note>4Fe-4S-S-AdoMet</note>
    </ligand>
</feature>
<feature type="binding site" evidence="1">
    <location>
        <position position="90"/>
    </location>
    <ligand>
        <name>[4Fe-4S] cluster</name>
        <dbReference type="ChEBI" id="CHEBI:49883"/>
        <label>2</label>
        <note>4Fe-4S-S-AdoMet</note>
    </ligand>
</feature>
<feature type="binding site" evidence="1">
    <location>
        <position position="296"/>
    </location>
    <ligand>
        <name>[4Fe-4S] cluster</name>
        <dbReference type="ChEBI" id="CHEBI:49883"/>
        <label>1</label>
    </ligand>
</feature>
<gene>
    <name evidence="1" type="primary">lipA</name>
    <name type="ordered locus">AZC_1747</name>
</gene>
<dbReference type="EC" id="2.8.1.8" evidence="1"/>
<dbReference type="EMBL" id="AP009384">
    <property type="protein sequence ID" value="BAF87745.1"/>
    <property type="molecule type" value="Genomic_DNA"/>
</dbReference>
<dbReference type="RefSeq" id="WP_012170275.1">
    <property type="nucleotide sequence ID" value="NC_009937.1"/>
</dbReference>
<dbReference type="SMR" id="A8I4L8"/>
<dbReference type="STRING" id="438753.AZC_1747"/>
<dbReference type="KEGG" id="azc:AZC_1747"/>
<dbReference type="eggNOG" id="COG0320">
    <property type="taxonomic scope" value="Bacteria"/>
</dbReference>
<dbReference type="HOGENOM" id="CLU_033144_2_1_5"/>
<dbReference type="UniPathway" id="UPA00538">
    <property type="reaction ID" value="UER00593"/>
</dbReference>
<dbReference type="Proteomes" id="UP000000270">
    <property type="component" value="Chromosome"/>
</dbReference>
<dbReference type="GO" id="GO:0005737">
    <property type="term" value="C:cytoplasm"/>
    <property type="evidence" value="ECO:0007669"/>
    <property type="project" value="UniProtKB-SubCell"/>
</dbReference>
<dbReference type="GO" id="GO:0051539">
    <property type="term" value="F:4 iron, 4 sulfur cluster binding"/>
    <property type="evidence" value="ECO:0007669"/>
    <property type="project" value="UniProtKB-UniRule"/>
</dbReference>
<dbReference type="GO" id="GO:0016992">
    <property type="term" value="F:lipoate synthase activity"/>
    <property type="evidence" value="ECO:0007669"/>
    <property type="project" value="UniProtKB-UniRule"/>
</dbReference>
<dbReference type="GO" id="GO:0046872">
    <property type="term" value="F:metal ion binding"/>
    <property type="evidence" value="ECO:0007669"/>
    <property type="project" value="UniProtKB-KW"/>
</dbReference>
<dbReference type="CDD" id="cd01335">
    <property type="entry name" value="Radical_SAM"/>
    <property type="match status" value="1"/>
</dbReference>
<dbReference type="FunFam" id="3.20.20.70:FF:000186">
    <property type="entry name" value="Lipoyl synthase"/>
    <property type="match status" value="1"/>
</dbReference>
<dbReference type="Gene3D" id="3.20.20.70">
    <property type="entry name" value="Aldolase class I"/>
    <property type="match status" value="1"/>
</dbReference>
<dbReference type="HAMAP" id="MF_00206">
    <property type="entry name" value="Lipoyl_synth"/>
    <property type="match status" value="1"/>
</dbReference>
<dbReference type="InterPro" id="IPR013785">
    <property type="entry name" value="Aldolase_TIM"/>
</dbReference>
<dbReference type="InterPro" id="IPR006638">
    <property type="entry name" value="Elp3/MiaA/NifB-like_rSAM"/>
</dbReference>
<dbReference type="InterPro" id="IPR003698">
    <property type="entry name" value="Lipoyl_synth"/>
</dbReference>
<dbReference type="InterPro" id="IPR007197">
    <property type="entry name" value="rSAM"/>
</dbReference>
<dbReference type="NCBIfam" id="TIGR00510">
    <property type="entry name" value="lipA"/>
    <property type="match status" value="1"/>
</dbReference>
<dbReference type="NCBIfam" id="NF004019">
    <property type="entry name" value="PRK05481.1"/>
    <property type="match status" value="1"/>
</dbReference>
<dbReference type="NCBIfam" id="NF009544">
    <property type="entry name" value="PRK12928.1"/>
    <property type="match status" value="1"/>
</dbReference>
<dbReference type="PANTHER" id="PTHR10949">
    <property type="entry name" value="LIPOYL SYNTHASE"/>
    <property type="match status" value="1"/>
</dbReference>
<dbReference type="PANTHER" id="PTHR10949:SF0">
    <property type="entry name" value="LIPOYL SYNTHASE, MITOCHONDRIAL"/>
    <property type="match status" value="1"/>
</dbReference>
<dbReference type="Pfam" id="PF04055">
    <property type="entry name" value="Radical_SAM"/>
    <property type="match status" value="1"/>
</dbReference>
<dbReference type="PIRSF" id="PIRSF005963">
    <property type="entry name" value="Lipoyl_synth"/>
    <property type="match status" value="1"/>
</dbReference>
<dbReference type="SFLD" id="SFLDF00271">
    <property type="entry name" value="lipoyl_synthase"/>
    <property type="match status" value="1"/>
</dbReference>
<dbReference type="SFLD" id="SFLDG01058">
    <property type="entry name" value="lipoyl_synthase_like"/>
    <property type="match status" value="1"/>
</dbReference>
<dbReference type="SMART" id="SM00729">
    <property type="entry name" value="Elp3"/>
    <property type="match status" value="1"/>
</dbReference>
<dbReference type="SUPFAM" id="SSF102114">
    <property type="entry name" value="Radical SAM enzymes"/>
    <property type="match status" value="1"/>
</dbReference>
<dbReference type="PROSITE" id="PS51918">
    <property type="entry name" value="RADICAL_SAM"/>
    <property type="match status" value="1"/>
</dbReference>
<protein>
    <recommendedName>
        <fullName evidence="1">Lipoyl synthase</fullName>
        <ecNumber evidence="1">2.8.1.8</ecNumber>
    </recommendedName>
    <alternativeName>
        <fullName evidence="1">Lip-syn</fullName>
        <shortName evidence="1">LS</shortName>
    </alternativeName>
    <alternativeName>
        <fullName evidence="1">Lipoate synthase</fullName>
    </alternativeName>
    <alternativeName>
        <fullName evidence="1">Lipoic acid synthase</fullName>
    </alternativeName>
    <alternativeName>
        <fullName evidence="1">Sulfur insertion protein LipA</fullName>
    </alternativeName>
</protein>
<sequence length="317" mass="35168">MVTVVNTLNRPRHPEKQNRPETEVLRKPDWIRVKAPGSAGWSNTAGIVRANGLHTVCEEAGCPNIGECWEKKHATFMIMGDTCTRACSFCNVRTGMPKALDLDEPQKVGEAVAKLGLSHVVITSVDRDDLTDGGAEHFARTIASIRKLSPGTTIEILTPDFLRKPGAIEVVVAARPDVFNHNLETVPGKYLTVRPGARYFHSLRLLQQVKELDPSIFTKSGIMVGLGEERNEVLQLMDDLRAAEVDFMTIGQYLQPTRKHHKVERFVTPDEFKAYETVAYAKGFLMVSSSPLTRSSHHAGDDFAKLRAAREAKLGRI</sequence>
<organism>
    <name type="scientific">Azorhizobium caulinodans (strain ATCC 43989 / DSM 5975 / JCM 20966 / LMG 6465 / NBRC 14845 / NCIMB 13405 / ORS 571)</name>
    <dbReference type="NCBI Taxonomy" id="438753"/>
    <lineage>
        <taxon>Bacteria</taxon>
        <taxon>Pseudomonadati</taxon>
        <taxon>Pseudomonadota</taxon>
        <taxon>Alphaproteobacteria</taxon>
        <taxon>Hyphomicrobiales</taxon>
        <taxon>Xanthobacteraceae</taxon>
        <taxon>Azorhizobium</taxon>
    </lineage>
</organism>
<proteinExistence type="inferred from homology"/>
<reference key="1">
    <citation type="submission" date="2007-04" db="EMBL/GenBank/DDBJ databases">
        <title>Complete genome sequence of the nitrogen-fixing bacterium Azorhizobium caulinodans ORS571.</title>
        <authorList>
            <person name="Lee K.B."/>
            <person name="Backer P.D."/>
            <person name="Aono T."/>
            <person name="Liu C.T."/>
            <person name="Suzuki S."/>
            <person name="Suzuki T."/>
            <person name="Kaneko T."/>
            <person name="Yamada M."/>
            <person name="Tabata S."/>
            <person name="Kupfer D.M."/>
            <person name="Najar F.Z."/>
            <person name="Wiley G.B."/>
            <person name="Roe B."/>
            <person name="Binnewies T."/>
            <person name="Ussery D."/>
            <person name="Vereecke D."/>
            <person name="Gevers D."/>
            <person name="Holsters M."/>
            <person name="Oyaizu H."/>
        </authorList>
    </citation>
    <scope>NUCLEOTIDE SEQUENCE [LARGE SCALE GENOMIC DNA]</scope>
    <source>
        <strain>ATCC 43989 / DSM 5975 / JCM 20966 / LMG 6465 / NBRC 14845 / NCIMB 13405 / ORS 571</strain>
    </source>
</reference>